<keyword id="KW-0175">Coiled coil</keyword>
<keyword id="KW-1015">Disulfide bond</keyword>
<keyword id="KW-0449">Lipoprotein</keyword>
<keyword id="KW-0472">Membrane</keyword>
<keyword id="KW-0496">Mitochondrion</keyword>
<keyword id="KW-0999">Mitochondrion inner membrane</keyword>
<keyword id="KW-0519">Myristate</keyword>
<keyword id="KW-1185">Reference proteome</keyword>
<proteinExistence type="evidence at transcript level"/>
<accession>Q63ZW2</accession>
<feature type="initiator methionine" description="Removed" evidence="2">
    <location>
        <position position="1"/>
    </location>
</feature>
<feature type="chain" id="PRO_0000416910" description="MICOS complex subunit mic25a">
    <location>
        <begin position="2"/>
        <end position="239"/>
    </location>
</feature>
<feature type="domain" description="CHCH" evidence="3">
    <location>
        <begin position="192"/>
        <end position="234"/>
    </location>
</feature>
<feature type="region of interest" description="Disordered" evidence="4">
    <location>
        <begin position="27"/>
        <end position="88"/>
    </location>
</feature>
<feature type="region of interest" description="Disordered" evidence="4">
    <location>
        <begin position="113"/>
        <end position="133"/>
    </location>
</feature>
<feature type="coiled-coil region" evidence="2">
    <location>
        <begin position="79"/>
        <end position="166"/>
    </location>
</feature>
<feature type="short sequence motif" description="Cx9C motif 1" evidence="3">
    <location>
        <begin position="195"/>
        <end position="205"/>
    </location>
</feature>
<feature type="short sequence motif" description="Cx9C motif 2" evidence="3">
    <location>
        <begin position="216"/>
        <end position="226"/>
    </location>
</feature>
<feature type="compositionally biased region" description="Polar residues" evidence="4">
    <location>
        <begin position="50"/>
        <end position="78"/>
    </location>
</feature>
<feature type="compositionally biased region" description="Basic and acidic residues" evidence="4">
    <location>
        <begin position="79"/>
        <end position="88"/>
    </location>
</feature>
<feature type="lipid moiety-binding region" description="N-myristoyl glycine" evidence="2">
    <location>
        <position position="2"/>
    </location>
</feature>
<feature type="disulfide bond" evidence="3">
    <location>
        <begin position="195"/>
        <end position="226"/>
    </location>
</feature>
<feature type="disulfide bond" evidence="3">
    <location>
        <begin position="205"/>
        <end position="216"/>
    </location>
</feature>
<name>MC25A_DANRE</name>
<comment type="function">
    <text evidence="1">Component of the MICOS complex, a large protein complex of the mitochondrial inner membrane that plays crucial roles in the maintenance of crista junctions, inner membrane architecture, and formation of contact sites to the outer membrane.</text>
</comment>
<comment type="subunit">
    <text evidence="1">Component of the mitochondrial contact site and cristae organizing system (MICOS) complex (also known as MINOS or MitOS complex).</text>
</comment>
<comment type="subcellular location">
    <subcellularLocation>
        <location evidence="1">Mitochondrion inner membrane</location>
        <topology evidence="1">Lipid-anchor</topology>
    </subcellularLocation>
</comment>
<comment type="similarity">
    <text evidence="5">Belongs to the MICOS complex subunit Mic19 family. Metazoan Mic25 subfamily.</text>
</comment>
<gene>
    <name type="primary">chchd6a</name>
    <name type="synonym">mic25a</name>
    <name type="ORF">zgc:91802</name>
</gene>
<evidence type="ECO:0000250" key="1">
    <source>
        <dbReference type="UniProtKB" id="Q9BRQ6"/>
    </source>
</evidence>
<evidence type="ECO:0000255" key="2"/>
<evidence type="ECO:0000255" key="3">
    <source>
        <dbReference type="PROSITE-ProRule" id="PRU01150"/>
    </source>
</evidence>
<evidence type="ECO:0000256" key="4">
    <source>
        <dbReference type="SAM" id="MobiDB-lite"/>
    </source>
</evidence>
<evidence type="ECO:0000305" key="5"/>
<protein>
    <recommendedName>
        <fullName>MICOS complex subunit mic25a</fullName>
    </recommendedName>
    <alternativeName>
        <fullName>Coiled-coil-helix-coiled-coil-helix domain-containing protein 6</fullName>
    </alternativeName>
</protein>
<sequence>MGSGESTTRRVSFGLDEDDRVRILRGVKLSEDVLQRMRNTNADPRPPANNKENQGHQTRTPSTSDAQAPKTQAKTTFPDSKEELKKRYEQQQAIIQEELARIARKEREAARQDISRAVQRERAQTRQESERAKQLGKQLDKKEAELKALEAFYQEQITQLEKKNEERFRMSAEQFHAAATRSEANIKARNVEPVCLNLQAQILNCYRENREQTLQCSDLAKEYMQCINAAKKNLLVNHG</sequence>
<organism>
    <name type="scientific">Danio rerio</name>
    <name type="common">Zebrafish</name>
    <name type="synonym">Brachydanio rerio</name>
    <dbReference type="NCBI Taxonomy" id="7955"/>
    <lineage>
        <taxon>Eukaryota</taxon>
        <taxon>Metazoa</taxon>
        <taxon>Chordata</taxon>
        <taxon>Craniata</taxon>
        <taxon>Vertebrata</taxon>
        <taxon>Euteleostomi</taxon>
        <taxon>Actinopterygii</taxon>
        <taxon>Neopterygii</taxon>
        <taxon>Teleostei</taxon>
        <taxon>Ostariophysi</taxon>
        <taxon>Cypriniformes</taxon>
        <taxon>Danionidae</taxon>
        <taxon>Danioninae</taxon>
        <taxon>Danio</taxon>
    </lineage>
</organism>
<dbReference type="EMBL" id="AL954678">
    <property type="status" value="NOT_ANNOTATED_CDS"/>
    <property type="molecule type" value="Genomic_DNA"/>
</dbReference>
<dbReference type="EMBL" id="BC082793">
    <property type="protein sequence ID" value="AAH82793.1"/>
    <property type="molecule type" value="mRNA"/>
</dbReference>
<dbReference type="RefSeq" id="NP_001005584.1">
    <property type="nucleotide sequence ID" value="NM_001005584.1"/>
</dbReference>
<dbReference type="RefSeq" id="XP_005162369.1">
    <property type="nucleotide sequence ID" value="XM_005162312.3"/>
</dbReference>
<dbReference type="SMR" id="Q63ZW2"/>
<dbReference type="FunCoup" id="Q63ZW2">
    <property type="interactions" value="1059"/>
</dbReference>
<dbReference type="STRING" id="7955.ENSDARP00000116560"/>
<dbReference type="PaxDb" id="7955-ENSDARP00000116560"/>
<dbReference type="DNASU" id="449542"/>
<dbReference type="Ensembl" id="ENSDART00000143933">
    <property type="protein sequence ID" value="ENSDARP00000116560"/>
    <property type="gene ID" value="ENSDARG00000003206"/>
</dbReference>
<dbReference type="GeneID" id="449542"/>
<dbReference type="KEGG" id="dre:449542"/>
<dbReference type="AGR" id="ZFIN:ZDB-GENE-040930-2"/>
<dbReference type="CTD" id="449542"/>
<dbReference type="ZFIN" id="ZDB-GENE-040930-2">
    <property type="gene designation" value="chchd6a"/>
</dbReference>
<dbReference type="eggNOG" id="KOG4083">
    <property type="taxonomic scope" value="Eukaryota"/>
</dbReference>
<dbReference type="HOGENOM" id="CLU_049040_0_0_1"/>
<dbReference type="InParanoid" id="Q63ZW2"/>
<dbReference type="OrthoDB" id="70030at2759"/>
<dbReference type="PhylomeDB" id="Q63ZW2"/>
<dbReference type="TreeFam" id="TF333651"/>
<dbReference type="PRO" id="PR:Q63ZW2"/>
<dbReference type="Proteomes" id="UP000000437">
    <property type="component" value="Chromosome 23"/>
</dbReference>
<dbReference type="Bgee" id="ENSDARG00000003206">
    <property type="expression patterns" value="Expressed in testis and 26 other cell types or tissues"/>
</dbReference>
<dbReference type="ExpressionAtlas" id="Q63ZW2">
    <property type="expression patterns" value="baseline and differential"/>
</dbReference>
<dbReference type="GO" id="GO:0061617">
    <property type="term" value="C:MICOS complex"/>
    <property type="evidence" value="ECO:0000318"/>
    <property type="project" value="GO_Central"/>
</dbReference>
<dbReference type="GO" id="GO:0005743">
    <property type="term" value="C:mitochondrial inner membrane"/>
    <property type="evidence" value="ECO:0000250"/>
    <property type="project" value="UniProtKB"/>
</dbReference>
<dbReference type="GO" id="GO:0005739">
    <property type="term" value="C:mitochondrion"/>
    <property type="evidence" value="ECO:0000250"/>
    <property type="project" value="UniProtKB"/>
</dbReference>
<dbReference type="GO" id="GO:0042407">
    <property type="term" value="P:cristae formation"/>
    <property type="evidence" value="ECO:0000250"/>
    <property type="project" value="UniProtKB"/>
</dbReference>
<dbReference type="GO" id="GO:0006974">
    <property type="term" value="P:DNA damage response"/>
    <property type="evidence" value="ECO:0000250"/>
    <property type="project" value="UniProtKB"/>
</dbReference>
<dbReference type="GO" id="GO:0007007">
    <property type="term" value="P:inner mitochondrial membrane organization"/>
    <property type="evidence" value="ECO:0000318"/>
    <property type="project" value="GO_Central"/>
</dbReference>
<dbReference type="InterPro" id="IPR007964">
    <property type="entry name" value="MIC19/MIC25"/>
</dbReference>
<dbReference type="InterPro" id="IPR042860">
    <property type="entry name" value="MIC25"/>
</dbReference>
<dbReference type="PANTHER" id="PTHR47609">
    <property type="entry name" value="MICOS COMPLEX SUBUNIT MIC25"/>
    <property type="match status" value="1"/>
</dbReference>
<dbReference type="PANTHER" id="PTHR47609:SF1">
    <property type="entry name" value="MICOS COMPLEX SUBUNIT MIC25"/>
    <property type="match status" value="1"/>
</dbReference>
<dbReference type="Pfam" id="PF05300">
    <property type="entry name" value="MIC19_MIC25"/>
    <property type="match status" value="1"/>
</dbReference>
<dbReference type="PROSITE" id="PS51808">
    <property type="entry name" value="CHCH"/>
    <property type="match status" value="1"/>
</dbReference>
<reference key="1">
    <citation type="journal article" date="2013" name="Nature">
        <title>The zebrafish reference genome sequence and its relationship to the human genome.</title>
        <authorList>
            <person name="Howe K."/>
            <person name="Clark M.D."/>
            <person name="Torroja C.F."/>
            <person name="Torrance J."/>
            <person name="Berthelot C."/>
            <person name="Muffato M."/>
            <person name="Collins J.E."/>
            <person name="Humphray S."/>
            <person name="McLaren K."/>
            <person name="Matthews L."/>
            <person name="McLaren S."/>
            <person name="Sealy I."/>
            <person name="Caccamo M."/>
            <person name="Churcher C."/>
            <person name="Scott C."/>
            <person name="Barrett J.C."/>
            <person name="Koch R."/>
            <person name="Rauch G.J."/>
            <person name="White S."/>
            <person name="Chow W."/>
            <person name="Kilian B."/>
            <person name="Quintais L.T."/>
            <person name="Guerra-Assuncao J.A."/>
            <person name="Zhou Y."/>
            <person name="Gu Y."/>
            <person name="Yen J."/>
            <person name="Vogel J.H."/>
            <person name="Eyre T."/>
            <person name="Redmond S."/>
            <person name="Banerjee R."/>
            <person name="Chi J."/>
            <person name="Fu B."/>
            <person name="Langley E."/>
            <person name="Maguire S.F."/>
            <person name="Laird G.K."/>
            <person name="Lloyd D."/>
            <person name="Kenyon E."/>
            <person name="Donaldson S."/>
            <person name="Sehra H."/>
            <person name="Almeida-King J."/>
            <person name="Loveland J."/>
            <person name="Trevanion S."/>
            <person name="Jones M."/>
            <person name="Quail M."/>
            <person name="Willey D."/>
            <person name="Hunt A."/>
            <person name="Burton J."/>
            <person name="Sims S."/>
            <person name="McLay K."/>
            <person name="Plumb B."/>
            <person name="Davis J."/>
            <person name="Clee C."/>
            <person name="Oliver K."/>
            <person name="Clark R."/>
            <person name="Riddle C."/>
            <person name="Elliot D."/>
            <person name="Threadgold G."/>
            <person name="Harden G."/>
            <person name="Ware D."/>
            <person name="Begum S."/>
            <person name="Mortimore B."/>
            <person name="Kerry G."/>
            <person name="Heath P."/>
            <person name="Phillimore B."/>
            <person name="Tracey A."/>
            <person name="Corby N."/>
            <person name="Dunn M."/>
            <person name="Johnson C."/>
            <person name="Wood J."/>
            <person name="Clark S."/>
            <person name="Pelan S."/>
            <person name="Griffiths G."/>
            <person name="Smith M."/>
            <person name="Glithero R."/>
            <person name="Howden P."/>
            <person name="Barker N."/>
            <person name="Lloyd C."/>
            <person name="Stevens C."/>
            <person name="Harley J."/>
            <person name="Holt K."/>
            <person name="Panagiotidis G."/>
            <person name="Lovell J."/>
            <person name="Beasley H."/>
            <person name="Henderson C."/>
            <person name="Gordon D."/>
            <person name="Auger K."/>
            <person name="Wright D."/>
            <person name="Collins J."/>
            <person name="Raisen C."/>
            <person name="Dyer L."/>
            <person name="Leung K."/>
            <person name="Robertson L."/>
            <person name="Ambridge K."/>
            <person name="Leongamornlert D."/>
            <person name="McGuire S."/>
            <person name="Gilderthorp R."/>
            <person name="Griffiths C."/>
            <person name="Manthravadi D."/>
            <person name="Nichol S."/>
            <person name="Barker G."/>
            <person name="Whitehead S."/>
            <person name="Kay M."/>
            <person name="Brown J."/>
            <person name="Murnane C."/>
            <person name="Gray E."/>
            <person name="Humphries M."/>
            <person name="Sycamore N."/>
            <person name="Barker D."/>
            <person name="Saunders D."/>
            <person name="Wallis J."/>
            <person name="Babbage A."/>
            <person name="Hammond S."/>
            <person name="Mashreghi-Mohammadi M."/>
            <person name="Barr L."/>
            <person name="Martin S."/>
            <person name="Wray P."/>
            <person name="Ellington A."/>
            <person name="Matthews N."/>
            <person name="Ellwood M."/>
            <person name="Woodmansey R."/>
            <person name="Clark G."/>
            <person name="Cooper J."/>
            <person name="Tromans A."/>
            <person name="Grafham D."/>
            <person name="Skuce C."/>
            <person name="Pandian R."/>
            <person name="Andrews R."/>
            <person name="Harrison E."/>
            <person name="Kimberley A."/>
            <person name="Garnett J."/>
            <person name="Fosker N."/>
            <person name="Hall R."/>
            <person name="Garner P."/>
            <person name="Kelly D."/>
            <person name="Bird C."/>
            <person name="Palmer S."/>
            <person name="Gehring I."/>
            <person name="Berger A."/>
            <person name="Dooley C.M."/>
            <person name="Ersan-Urun Z."/>
            <person name="Eser C."/>
            <person name="Geiger H."/>
            <person name="Geisler M."/>
            <person name="Karotki L."/>
            <person name="Kirn A."/>
            <person name="Konantz J."/>
            <person name="Konantz M."/>
            <person name="Oberlander M."/>
            <person name="Rudolph-Geiger S."/>
            <person name="Teucke M."/>
            <person name="Lanz C."/>
            <person name="Raddatz G."/>
            <person name="Osoegawa K."/>
            <person name="Zhu B."/>
            <person name="Rapp A."/>
            <person name="Widaa S."/>
            <person name="Langford C."/>
            <person name="Yang F."/>
            <person name="Schuster S.C."/>
            <person name="Carter N.P."/>
            <person name="Harrow J."/>
            <person name="Ning Z."/>
            <person name="Herrero J."/>
            <person name="Searle S.M."/>
            <person name="Enright A."/>
            <person name="Geisler R."/>
            <person name="Plasterk R.H."/>
            <person name="Lee C."/>
            <person name="Westerfield M."/>
            <person name="de Jong P.J."/>
            <person name="Zon L.I."/>
            <person name="Postlethwait J.H."/>
            <person name="Nusslein-Volhard C."/>
            <person name="Hubbard T.J."/>
            <person name="Roest Crollius H."/>
            <person name="Rogers J."/>
            <person name="Stemple D.L."/>
        </authorList>
    </citation>
    <scope>NUCLEOTIDE SEQUENCE [LARGE SCALE GENOMIC DNA]</scope>
    <source>
        <strain>Tuebingen</strain>
    </source>
</reference>
<reference key="2">
    <citation type="submission" date="2004-09" db="EMBL/GenBank/DDBJ databases">
        <authorList>
            <consortium name="NIH - Zebrafish Gene Collection (ZGC) project"/>
        </authorList>
    </citation>
    <scope>NUCLEOTIDE SEQUENCE [LARGE SCALE MRNA]</scope>
</reference>